<keyword id="KW-0413">Isomerase</keyword>
<keyword id="KW-0460">Magnesium</keyword>
<keyword id="KW-0479">Metal-binding</keyword>
<keyword id="KW-0597">Phosphoprotein</keyword>
<gene>
    <name evidence="1" type="primary">glmM</name>
    <name type="ordered locus">CLB_3477</name>
</gene>
<protein>
    <recommendedName>
        <fullName evidence="1">Phosphoglucosamine mutase</fullName>
        <ecNumber evidence="1">5.4.2.10</ecNumber>
    </recommendedName>
</protein>
<proteinExistence type="inferred from homology"/>
<comment type="function">
    <text evidence="1">Catalyzes the conversion of glucosamine-6-phosphate to glucosamine-1-phosphate.</text>
</comment>
<comment type="catalytic activity">
    <reaction evidence="1">
        <text>alpha-D-glucosamine 1-phosphate = D-glucosamine 6-phosphate</text>
        <dbReference type="Rhea" id="RHEA:23424"/>
        <dbReference type="ChEBI" id="CHEBI:58516"/>
        <dbReference type="ChEBI" id="CHEBI:58725"/>
        <dbReference type="EC" id="5.4.2.10"/>
    </reaction>
</comment>
<comment type="cofactor">
    <cofactor evidence="1">
        <name>Mg(2+)</name>
        <dbReference type="ChEBI" id="CHEBI:18420"/>
    </cofactor>
    <text evidence="1">Binds 1 Mg(2+) ion per subunit.</text>
</comment>
<comment type="PTM">
    <text evidence="1">Activated by phosphorylation.</text>
</comment>
<comment type="similarity">
    <text evidence="1">Belongs to the phosphohexose mutase family.</text>
</comment>
<evidence type="ECO:0000255" key="1">
    <source>
        <dbReference type="HAMAP-Rule" id="MF_01554"/>
    </source>
</evidence>
<dbReference type="EC" id="5.4.2.10" evidence="1"/>
<dbReference type="EMBL" id="CP000726">
    <property type="protein sequence ID" value="ABS35577.1"/>
    <property type="molecule type" value="Genomic_DNA"/>
</dbReference>
<dbReference type="RefSeq" id="WP_012048332.1">
    <property type="nucleotide sequence ID" value="NC_009697.1"/>
</dbReference>
<dbReference type="SMR" id="A7FZ14"/>
<dbReference type="GeneID" id="5187856"/>
<dbReference type="KEGG" id="cba:CLB_3477"/>
<dbReference type="HOGENOM" id="CLU_016950_7_0_9"/>
<dbReference type="GO" id="GO:0005829">
    <property type="term" value="C:cytosol"/>
    <property type="evidence" value="ECO:0007669"/>
    <property type="project" value="TreeGrafter"/>
</dbReference>
<dbReference type="GO" id="GO:0000287">
    <property type="term" value="F:magnesium ion binding"/>
    <property type="evidence" value="ECO:0007669"/>
    <property type="project" value="UniProtKB-UniRule"/>
</dbReference>
<dbReference type="GO" id="GO:0008966">
    <property type="term" value="F:phosphoglucosamine mutase activity"/>
    <property type="evidence" value="ECO:0007669"/>
    <property type="project" value="UniProtKB-UniRule"/>
</dbReference>
<dbReference type="GO" id="GO:0004615">
    <property type="term" value="F:phosphomannomutase activity"/>
    <property type="evidence" value="ECO:0007669"/>
    <property type="project" value="TreeGrafter"/>
</dbReference>
<dbReference type="GO" id="GO:0005975">
    <property type="term" value="P:carbohydrate metabolic process"/>
    <property type="evidence" value="ECO:0007669"/>
    <property type="project" value="InterPro"/>
</dbReference>
<dbReference type="GO" id="GO:0009252">
    <property type="term" value="P:peptidoglycan biosynthetic process"/>
    <property type="evidence" value="ECO:0007669"/>
    <property type="project" value="TreeGrafter"/>
</dbReference>
<dbReference type="GO" id="GO:0006048">
    <property type="term" value="P:UDP-N-acetylglucosamine biosynthetic process"/>
    <property type="evidence" value="ECO:0007669"/>
    <property type="project" value="TreeGrafter"/>
</dbReference>
<dbReference type="CDD" id="cd05802">
    <property type="entry name" value="GlmM"/>
    <property type="match status" value="1"/>
</dbReference>
<dbReference type="FunFam" id="3.30.310.50:FF:000001">
    <property type="entry name" value="Phosphoglucosamine mutase"/>
    <property type="match status" value="1"/>
</dbReference>
<dbReference type="FunFam" id="3.40.120.10:FF:000001">
    <property type="entry name" value="Phosphoglucosamine mutase"/>
    <property type="match status" value="1"/>
</dbReference>
<dbReference type="FunFam" id="3.40.120.10:FF:000002">
    <property type="entry name" value="Phosphoglucosamine mutase"/>
    <property type="match status" value="1"/>
</dbReference>
<dbReference type="Gene3D" id="3.40.120.10">
    <property type="entry name" value="Alpha-D-Glucose-1,6-Bisphosphate, subunit A, domain 3"/>
    <property type="match status" value="3"/>
</dbReference>
<dbReference type="Gene3D" id="3.30.310.50">
    <property type="entry name" value="Alpha-D-phosphohexomutase, C-terminal domain"/>
    <property type="match status" value="1"/>
</dbReference>
<dbReference type="HAMAP" id="MF_01554_B">
    <property type="entry name" value="GlmM_B"/>
    <property type="match status" value="1"/>
</dbReference>
<dbReference type="InterPro" id="IPR005844">
    <property type="entry name" value="A-D-PHexomutase_a/b/a-I"/>
</dbReference>
<dbReference type="InterPro" id="IPR016055">
    <property type="entry name" value="A-D-PHexomutase_a/b/a-I/II/III"/>
</dbReference>
<dbReference type="InterPro" id="IPR005845">
    <property type="entry name" value="A-D-PHexomutase_a/b/a-II"/>
</dbReference>
<dbReference type="InterPro" id="IPR005846">
    <property type="entry name" value="A-D-PHexomutase_a/b/a-III"/>
</dbReference>
<dbReference type="InterPro" id="IPR005843">
    <property type="entry name" value="A-D-PHexomutase_C"/>
</dbReference>
<dbReference type="InterPro" id="IPR036900">
    <property type="entry name" value="A-D-PHexomutase_C_sf"/>
</dbReference>
<dbReference type="InterPro" id="IPR016066">
    <property type="entry name" value="A-D-PHexomutase_CS"/>
</dbReference>
<dbReference type="InterPro" id="IPR005841">
    <property type="entry name" value="Alpha-D-phosphohexomutase_SF"/>
</dbReference>
<dbReference type="InterPro" id="IPR006352">
    <property type="entry name" value="GlmM_bact"/>
</dbReference>
<dbReference type="InterPro" id="IPR050060">
    <property type="entry name" value="Phosphoglucosamine_mutase"/>
</dbReference>
<dbReference type="NCBIfam" id="TIGR01455">
    <property type="entry name" value="glmM"/>
    <property type="match status" value="1"/>
</dbReference>
<dbReference type="NCBIfam" id="NF008139">
    <property type="entry name" value="PRK10887.1"/>
    <property type="match status" value="1"/>
</dbReference>
<dbReference type="PANTHER" id="PTHR42946:SF1">
    <property type="entry name" value="PHOSPHOGLUCOMUTASE (ALPHA-D-GLUCOSE-1,6-BISPHOSPHATE-DEPENDENT)"/>
    <property type="match status" value="1"/>
</dbReference>
<dbReference type="PANTHER" id="PTHR42946">
    <property type="entry name" value="PHOSPHOHEXOSE MUTASE"/>
    <property type="match status" value="1"/>
</dbReference>
<dbReference type="Pfam" id="PF02878">
    <property type="entry name" value="PGM_PMM_I"/>
    <property type="match status" value="1"/>
</dbReference>
<dbReference type="Pfam" id="PF02879">
    <property type="entry name" value="PGM_PMM_II"/>
    <property type="match status" value="1"/>
</dbReference>
<dbReference type="Pfam" id="PF02880">
    <property type="entry name" value="PGM_PMM_III"/>
    <property type="match status" value="1"/>
</dbReference>
<dbReference type="Pfam" id="PF00408">
    <property type="entry name" value="PGM_PMM_IV"/>
    <property type="match status" value="1"/>
</dbReference>
<dbReference type="PRINTS" id="PR00509">
    <property type="entry name" value="PGMPMM"/>
</dbReference>
<dbReference type="SUPFAM" id="SSF55957">
    <property type="entry name" value="Phosphoglucomutase, C-terminal domain"/>
    <property type="match status" value="1"/>
</dbReference>
<dbReference type="SUPFAM" id="SSF53738">
    <property type="entry name" value="Phosphoglucomutase, first 3 domains"/>
    <property type="match status" value="3"/>
</dbReference>
<dbReference type="PROSITE" id="PS00710">
    <property type="entry name" value="PGM_PMM"/>
    <property type="match status" value="1"/>
</dbReference>
<reference key="1">
    <citation type="journal article" date="2007" name="PLoS ONE">
        <title>Analysis of the neurotoxin complex genes in Clostridium botulinum A1-A4 and B1 strains: BoNT/A3, /Ba4 and /B1 clusters are located within plasmids.</title>
        <authorList>
            <person name="Smith T.J."/>
            <person name="Hill K.K."/>
            <person name="Foley B.T."/>
            <person name="Detter J.C."/>
            <person name="Munk A.C."/>
            <person name="Bruce D.C."/>
            <person name="Doggett N.A."/>
            <person name="Smith L.A."/>
            <person name="Marks J.D."/>
            <person name="Xie G."/>
            <person name="Brettin T.S."/>
        </authorList>
    </citation>
    <scope>NUCLEOTIDE SEQUENCE [LARGE SCALE GENOMIC DNA]</scope>
    <source>
        <strain>ATCC 19397 / Type A</strain>
    </source>
</reference>
<organism>
    <name type="scientific">Clostridium botulinum (strain ATCC 19397 / Type A)</name>
    <dbReference type="NCBI Taxonomy" id="441770"/>
    <lineage>
        <taxon>Bacteria</taxon>
        <taxon>Bacillati</taxon>
        <taxon>Bacillota</taxon>
        <taxon>Clostridia</taxon>
        <taxon>Eubacteriales</taxon>
        <taxon>Clostridiaceae</taxon>
        <taxon>Clostridium</taxon>
    </lineage>
</organism>
<accession>A7FZ14</accession>
<name>GLMM_CLOB1</name>
<feature type="chain" id="PRO_1000068900" description="Phosphoglucosamine mutase">
    <location>
        <begin position="1"/>
        <end position="449"/>
    </location>
</feature>
<feature type="active site" description="Phosphoserine intermediate" evidence="1">
    <location>
        <position position="100"/>
    </location>
</feature>
<feature type="binding site" description="via phosphate group" evidence="1">
    <location>
        <position position="100"/>
    </location>
    <ligand>
        <name>Mg(2+)</name>
        <dbReference type="ChEBI" id="CHEBI:18420"/>
    </ligand>
</feature>
<feature type="binding site" evidence="1">
    <location>
        <position position="241"/>
    </location>
    <ligand>
        <name>Mg(2+)</name>
        <dbReference type="ChEBI" id="CHEBI:18420"/>
    </ligand>
</feature>
<feature type="binding site" evidence="1">
    <location>
        <position position="243"/>
    </location>
    <ligand>
        <name>Mg(2+)</name>
        <dbReference type="ChEBI" id="CHEBI:18420"/>
    </ligand>
</feature>
<feature type="binding site" evidence="1">
    <location>
        <position position="245"/>
    </location>
    <ligand>
        <name>Mg(2+)</name>
        <dbReference type="ChEBI" id="CHEBI:18420"/>
    </ligand>
</feature>
<feature type="modified residue" description="Phosphoserine" evidence="1">
    <location>
        <position position="100"/>
    </location>
</feature>
<sequence>MGRMFGTDGVRGIANKELTADLAYKLGKAGAFILTEGTHRSKILVGMDTRISGDMLESALVAGILSVGAEAICVGVIPTPAIAYLTRKYNADAGVVISASHNPVEYNGIKFFNKNGYKLSDELEDSIQALIRDDFKDVPVLTGENIGRKIEEDGEAIRDYIDFAKSTIKGDLKGLKVALDCANGASYITSVEAFKELGAEVHVINNKPDGININRNSGSTHPEDLMEYVVKNNCHMGLAFDGDADRCLAIDEKGNLINGDFILAICGKELKKQGRLKKNTIVVTVMSNLGLDIAMKKEEINTIKTKVGDRYVLEEMLKNDYAIGGEQSGHIIFSDYNTTGDGLVTALQLAHIVKESGKTFSELCSIMKELPQVLVNAKVPNDQKDIYLKDEEIKSEIDTITKNLDGSGRVLIRPSGTEPLVRVMLEGENQKEIDKLAHGLAKLIENKVK</sequence>